<gene>
    <name evidence="1" type="primary">rpmJ</name>
    <name type="ordered locus">Sputcn32_3738</name>
</gene>
<evidence type="ECO:0000255" key="1">
    <source>
        <dbReference type="HAMAP-Rule" id="MF_00251"/>
    </source>
</evidence>
<evidence type="ECO:0000305" key="2"/>
<sequence>MKVRASVKKICRNCKIVKRSGVVRVICVEPKHKQRQG</sequence>
<dbReference type="EMBL" id="CP000681">
    <property type="protein sequence ID" value="ABP77445.1"/>
    <property type="molecule type" value="Genomic_DNA"/>
</dbReference>
<dbReference type="SMR" id="A4YBW2"/>
<dbReference type="STRING" id="319224.Sputcn32_3738"/>
<dbReference type="KEGG" id="spc:Sputcn32_3738"/>
<dbReference type="eggNOG" id="COG0257">
    <property type="taxonomic scope" value="Bacteria"/>
</dbReference>
<dbReference type="HOGENOM" id="CLU_135723_6_2_6"/>
<dbReference type="GO" id="GO:0005737">
    <property type="term" value="C:cytoplasm"/>
    <property type="evidence" value="ECO:0007669"/>
    <property type="project" value="UniProtKB-ARBA"/>
</dbReference>
<dbReference type="GO" id="GO:1990904">
    <property type="term" value="C:ribonucleoprotein complex"/>
    <property type="evidence" value="ECO:0007669"/>
    <property type="project" value="UniProtKB-KW"/>
</dbReference>
<dbReference type="GO" id="GO:0005840">
    <property type="term" value="C:ribosome"/>
    <property type="evidence" value="ECO:0007669"/>
    <property type="project" value="UniProtKB-KW"/>
</dbReference>
<dbReference type="GO" id="GO:0003735">
    <property type="term" value="F:structural constituent of ribosome"/>
    <property type="evidence" value="ECO:0007669"/>
    <property type="project" value="InterPro"/>
</dbReference>
<dbReference type="GO" id="GO:0006412">
    <property type="term" value="P:translation"/>
    <property type="evidence" value="ECO:0007669"/>
    <property type="project" value="UniProtKB-UniRule"/>
</dbReference>
<dbReference type="HAMAP" id="MF_00251">
    <property type="entry name" value="Ribosomal_bL36"/>
    <property type="match status" value="1"/>
</dbReference>
<dbReference type="InterPro" id="IPR000473">
    <property type="entry name" value="Ribosomal_bL36"/>
</dbReference>
<dbReference type="InterPro" id="IPR035977">
    <property type="entry name" value="Ribosomal_bL36_sp"/>
</dbReference>
<dbReference type="NCBIfam" id="TIGR01022">
    <property type="entry name" value="rpmJ_bact"/>
    <property type="match status" value="1"/>
</dbReference>
<dbReference type="PANTHER" id="PTHR42888">
    <property type="entry name" value="50S RIBOSOMAL PROTEIN L36, CHLOROPLASTIC"/>
    <property type="match status" value="1"/>
</dbReference>
<dbReference type="PANTHER" id="PTHR42888:SF1">
    <property type="entry name" value="LARGE RIBOSOMAL SUBUNIT PROTEIN BL36C"/>
    <property type="match status" value="1"/>
</dbReference>
<dbReference type="Pfam" id="PF00444">
    <property type="entry name" value="Ribosomal_L36"/>
    <property type="match status" value="1"/>
</dbReference>
<dbReference type="SUPFAM" id="SSF57840">
    <property type="entry name" value="Ribosomal protein L36"/>
    <property type="match status" value="1"/>
</dbReference>
<dbReference type="PROSITE" id="PS00828">
    <property type="entry name" value="RIBOSOMAL_L36"/>
    <property type="match status" value="1"/>
</dbReference>
<organism>
    <name type="scientific">Shewanella putrefaciens (strain CN-32 / ATCC BAA-453)</name>
    <dbReference type="NCBI Taxonomy" id="319224"/>
    <lineage>
        <taxon>Bacteria</taxon>
        <taxon>Pseudomonadati</taxon>
        <taxon>Pseudomonadota</taxon>
        <taxon>Gammaproteobacteria</taxon>
        <taxon>Alteromonadales</taxon>
        <taxon>Shewanellaceae</taxon>
        <taxon>Shewanella</taxon>
    </lineage>
</organism>
<reference key="1">
    <citation type="submission" date="2007-04" db="EMBL/GenBank/DDBJ databases">
        <title>Complete sequence of Shewanella putrefaciens CN-32.</title>
        <authorList>
            <consortium name="US DOE Joint Genome Institute"/>
            <person name="Copeland A."/>
            <person name="Lucas S."/>
            <person name="Lapidus A."/>
            <person name="Barry K."/>
            <person name="Detter J.C."/>
            <person name="Glavina del Rio T."/>
            <person name="Hammon N."/>
            <person name="Israni S."/>
            <person name="Dalin E."/>
            <person name="Tice H."/>
            <person name="Pitluck S."/>
            <person name="Chain P."/>
            <person name="Malfatti S."/>
            <person name="Shin M."/>
            <person name="Vergez L."/>
            <person name="Schmutz J."/>
            <person name="Larimer F."/>
            <person name="Land M."/>
            <person name="Hauser L."/>
            <person name="Kyrpides N."/>
            <person name="Mikhailova N."/>
            <person name="Romine M.F."/>
            <person name="Fredrickson J."/>
            <person name="Tiedje J."/>
            <person name="Richardson P."/>
        </authorList>
    </citation>
    <scope>NUCLEOTIDE SEQUENCE [LARGE SCALE GENOMIC DNA]</scope>
    <source>
        <strain>CN-32 / ATCC BAA-453</strain>
    </source>
</reference>
<proteinExistence type="inferred from homology"/>
<name>RL36_SHEPC</name>
<comment type="similarity">
    <text evidence="1">Belongs to the bacterial ribosomal protein bL36 family.</text>
</comment>
<feature type="chain" id="PRO_1000003416" description="Large ribosomal subunit protein bL36">
    <location>
        <begin position="1"/>
        <end position="37"/>
    </location>
</feature>
<accession>A4YBW2</accession>
<protein>
    <recommendedName>
        <fullName evidence="1">Large ribosomal subunit protein bL36</fullName>
    </recommendedName>
    <alternativeName>
        <fullName evidence="2">50S ribosomal protein L36</fullName>
    </alternativeName>
</protein>
<keyword id="KW-0687">Ribonucleoprotein</keyword>
<keyword id="KW-0689">Ribosomal protein</keyword>